<reference key="1">
    <citation type="journal article" date="2000" name="DNA Res.">
        <title>Structural analysis of Arabidopsis thaliana chromosome 5. X. Sequence features of the regions of 3,076,755 bp covered by sixty P1 and TAC clones.</title>
        <authorList>
            <person name="Sato S."/>
            <person name="Nakamura Y."/>
            <person name="Kaneko T."/>
            <person name="Katoh T."/>
            <person name="Asamizu E."/>
            <person name="Kotani H."/>
            <person name="Tabata S."/>
        </authorList>
    </citation>
    <scope>NUCLEOTIDE SEQUENCE [LARGE SCALE GENOMIC DNA]</scope>
    <source>
        <strain>cv. Columbia</strain>
    </source>
</reference>
<reference key="2">
    <citation type="journal article" date="2017" name="Plant J.">
        <title>Araport11: a complete reannotation of the Arabidopsis thaliana reference genome.</title>
        <authorList>
            <person name="Cheng C.Y."/>
            <person name="Krishnakumar V."/>
            <person name="Chan A.P."/>
            <person name="Thibaud-Nissen F."/>
            <person name="Schobel S."/>
            <person name="Town C.D."/>
        </authorList>
    </citation>
    <scope>GENOME REANNOTATION</scope>
    <source>
        <strain>cv. Columbia</strain>
    </source>
</reference>
<reference key="3">
    <citation type="journal article" date="2003" name="Science">
        <title>Empirical analysis of transcriptional activity in the Arabidopsis genome.</title>
        <authorList>
            <person name="Yamada K."/>
            <person name="Lim J."/>
            <person name="Dale J.M."/>
            <person name="Chen H."/>
            <person name="Shinn P."/>
            <person name="Palm C.J."/>
            <person name="Southwick A.M."/>
            <person name="Wu H.C."/>
            <person name="Kim C.J."/>
            <person name="Nguyen M."/>
            <person name="Pham P.K."/>
            <person name="Cheuk R.F."/>
            <person name="Karlin-Newmann G."/>
            <person name="Liu S.X."/>
            <person name="Lam B."/>
            <person name="Sakano H."/>
            <person name="Wu T."/>
            <person name="Yu G."/>
            <person name="Miranda M."/>
            <person name="Quach H.L."/>
            <person name="Tripp M."/>
            <person name="Chang C.H."/>
            <person name="Lee J.M."/>
            <person name="Toriumi M.J."/>
            <person name="Chan M.M."/>
            <person name="Tang C.C."/>
            <person name="Onodera C.S."/>
            <person name="Deng J.M."/>
            <person name="Akiyama K."/>
            <person name="Ansari Y."/>
            <person name="Arakawa T."/>
            <person name="Banh J."/>
            <person name="Banno F."/>
            <person name="Bowser L."/>
            <person name="Brooks S.Y."/>
            <person name="Carninci P."/>
            <person name="Chao Q."/>
            <person name="Choy N."/>
            <person name="Enju A."/>
            <person name="Goldsmith A.D."/>
            <person name="Gurjal M."/>
            <person name="Hansen N.F."/>
            <person name="Hayashizaki Y."/>
            <person name="Johnson-Hopson C."/>
            <person name="Hsuan V.W."/>
            <person name="Iida K."/>
            <person name="Karnes M."/>
            <person name="Khan S."/>
            <person name="Koesema E."/>
            <person name="Ishida J."/>
            <person name="Jiang P.X."/>
            <person name="Jones T."/>
            <person name="Kawai J."/>
            <person name="Kamiya A."/>
            <person name="Meyers C."/>
            <person name="Nakajima M."/>
            <person name="Narusaka M."/>
            <person name="Seki M."/>
            <person name="Sakurai T."/>
            <person name="Satou M."/>
            <person name="Tamse R."/>
            <person name="Vaysberg M."/>
            <person name="Wallender E.K."/>
            <person name="Wong C."/>
            <person name="Yamamura Y."/>
            <person name="Yuan S."/>
            <person name="Shinozaki K."/>
            <person name="Davis R.W."/>
            <person name="Theologis A."/>
            <person name="Ecker J.R."/>
        </authorList>
    </citation>
    <scope>NUCLEOTIDE SEQUENCE [LARGE SCALE MRNA]</scope>
    <source>
        <strain>cv. Columbia</strain>
    </source>
</reference>
<reference key="4">
    <citation type="submission" date="2004-09" db="EMBL/GenBank/DDBJ databases">
        <title>Large-scale analysis of RIKEN Arabidopsis full-length (RAFL) cDNAs.</title>
        <authorList>
            <person name="Totoki Y."/>
            <person name="Seki M."/>
            <person name="Ishida J."/>
            <person name="Nakajima M."/>
            <person name="Enju A."/>
            <person name="Kamiya A."/>
            <person name="Narusaka M."/>
            <person name="Shin-i T."/>
            <person name="Nakagawa M."/>
            <person name="Sakamoto N."/>
            <person name="Oishi K."/>
            <person name="Kohara Y."/>
            <person name="Kobayashi M."/>
            <person name="Toyoda A."/>
            <person name="Sakaki Y."/>
            <person name="Sakurai T."/>
            <person name="Iida K."/>
            <person name="Akiyama K."/>
            <person name="Satou M."/>
            <person name="Toyoda T."/>
            <person name="Konagaya A."/>
            <person name="Carninci P."/>
            <person name="Kawai J."/>
            <person name="Hayashizaki Y."/>
            <person name="Shinozaki K."/>
        </authorList>
    </citation>
    <scope>NUCLEOTIDE SEQUENCE [LARGE SCALE MRNA]</scope>
    <source>
        <strain>cv. Columbia</strain>
    </source>
</reference>
<reference key="5">
    <citation type="journal article" date="2006" name="Plant J.">
        <title>CUL4 associates with DDB1 and DET1 and its downregulation affects diverse aspects of development in Arabidopsis thaliana.</title>
        <authorList>
            <person name="Bernhardt A."/>
            <person name="Lechner E."/>
            <person name="Hano P."/>
            <person name="Schade V."/>
            <person name="Dieterle M."/>
            <person name="Anders M."/>
            <person name="Dubin M.J."/>
            <person name="Benvenuto G."/>
            <person name="Bowler C."/>
            <person name="Genschik P."/>
            <person name="Hellmann H."/>
        </authorList>
    </citation>
    <scope>INTERACTION WITH DDB1A</scope>
</reference>
<reference key="6">
    <citation type="journal article" date="2007" name="Genetics">
        <title>DDB2, DDB1A and DET1 exhibit complex interactions during Arabidopsis development.</title>
        <authorList>
            <person name="Al Khateeb W.M."/>
            <person name="Schroeder D.F."/>
        </authorList>
    </citation>
    <scope>COMPONENT OF THE UV-DDB COMPLEX</scope>
</reference>
<reference key="7">
    <citation type="journal article" date="2008" name="PLoS Genet.">
        <title>Regulation and role of Arabidopsis CUL4-DDB1A-DDB2 in maintaining genome integrity upon UV stress.</title>
        <authorList>
            <person name="Molinier J."/>
            <person name="Lechner E."/>
            <person name="Dumbliauskas E."/>
            <person name="Genschik P."/>
        </authorList>
    </citation>
    <scope>FUNCTION</scope>
    <scope>INTERACTION WITH CUL4 AND DDB1A</scope>
    <scope>SUBCELLULAR LOCATION</scope>
    <scope>MUTAGENESIS OF ARG-343</scope>
</reference>
<reference key="8">
    <citation type="journal article" date="2008" name="Plant Cell">
        <title>Characterization of Arabidopsis and rice DWD proteins and their roles as substrate receptors for CUL4-RING E3 ubiquitin ligases.</title>
        <authorList>
            <person name="Lee J.H."/>
            <person name="Terzaghi W."/>
            <person name="Gusmaroli G."/>
            <person name="Charron J.B."/>
            <person name="Yoon H.J."/>
            <person name="Chen H."/>
            <person name="He Y.J."/>
            <person name="Xiong Y."/>
            <person name="Deng X.W."/>
        </authorList>
    </citation>
    <scope>DWD MOTIF</scope>
</reference>
<reference key="9">
    <citation type="journal article" date="2010" name="Plant J.">
        <title>The DDB1a interacting proteins ATCSA-1 and DDB2 are critical factors for UV-B tolerance and genomic integrity in Arabidopsis thaliana.</title>
        <authorList>
            <person name="Biedermann S."/>
            <person name="Hellmann H."/>
        </authorList>
    </citation>
    <scope>FUNCTION</scope>
    <scope>TISSUE SPECIFICITY</scope>
    <scope>INDUCTION BY UV-B</scope>
</reference>
<accession>Q6NQ88</accession>
<accession>Q9LUY5</accession>
<comment type="function">
    <text evidence="1 5 6">May function as the substrate recognition module for a DCX (DDB1-CUL4-X-box) E3 ubiquitin-protein ligase complex including DDB1A and CUL4 (By similarity). Required for DNA repair. Binds to DDB1A to form the UV-damaged DNA-binding protein complex (the UV-DDB complex). The UV-DDB complex may recognize UV-induced DNA damage and recruit proteins of the nucleotide excision repair pathway (the NER pathway) to initiate DNA repair (PubMed:18551167). Involved in UV-B tolerance and genome integrity. In association with ATCSA-1, is necessary for repair of UV-B-induced DNA lesions (PubMed:20128879).</text>
</comment>
<comment type="pathway">
    <text>Protein modification; protein ubiquitination.</text>
</comment>
<comment type="subunit">
    <text evidence="4 5">Component of the UV-DDB complex, which is composed of DDB1A and DDB2. Interacts with CUL4.</text>
</comment>
<comment type="interaction">
    <interactant intactId="EBI-2028926">
        <id>Q6NQ88</id>
    </interactant>
    <interactant intactId="EBI-8565056">
        <id>Q9M0V3-1</id>
        <label>DDB1A</label>
    </interactant>
    <organismsDiffer>false</organismsDiffer>
    <experiments>2</experiments>
</comment>
<comment type="subcellular location">
    <subcellularLocation>
        <location evidence="5">Nucleus</location>
    </subcellularLocation>
    <text>Broadly distributed over chromatin.</text>
</comment>
<comment type="tissue specificity">
    <text evidence="6">Expressed in roots and flowers. Expressed at low levels in stems.</text>
</comment>
<comment type="induction">
    <text evidence="6">Induced transiently by UV-B.</text>
</comment>
<comment type="domain">
    <text evidence="1">The DWD box is required for interaction with DDB1A.</text>
</comment>
<comment type="domain">
    <text evidence="1">Interblade loops of the WD repeat region mediate most of the interaction with DNA. A hairpin between blades 5 and 6 inserts into DNA minor groove and mediates recognition of lesions and separation of the damaged and undamaged strands (By similarity).</text>
</comment>
<comment type="similarity">
    <text evidence="7">Belongs to the WD repeat DDB2/WDR76 family.</text>
</comment>
<comment type="caution">
    <text evidence="7">Although the DWD box motif has been suggested to mediate interaction of DDB2 with DDB1A, mutagenesis experiments have to date failed to demonstrate a role for this motif.</text>
</comment>
<comment type="sequence caution" evidence="7">
    <conflict type="erroneous gene model prediction">
        <sequence resource="EMBL-CDS" id="BAA97344"/>
    </conflict>
</comment>
<name>DDB2_ARATH</name>
<protein>
    <recommendedName>
        <fullName>Protein DAMAGED DNA-BINDING 2</fullName>
    </recommendedName>
    <alternativeName>
        <fullName>UV-damaged DNA-binding protein 2</fullName>
    </alternativeName>
</protein>
<dbReference type="EMBL" id="AB020755">
    <property type="protein sequence ID" value="BAA97344.1"/>
    <property type="status" value="ALT_SEQ"/>
    <property type="molecule type" value="Genomic_DNA"/>
</dbReference>
<dbReference type="EMBL" id="CP002688">
    <property type="protein sequence ID" value="AED97095.1"/>
    <property type="molecule type" value="Genomic_DNA"/>
</dbReference>
<dbReference type="EMBL" id="BT010570">
    <property type="protein sequence ID" value="AAQ65193.1"/>
    <property type="molecule type" value="mRNA"/>
</dbReference>
<dbReference type="EMBL" id="AK175124">
    <property type="protein sequence ID" value="BAD42887.1"/>
    <property type="molecule type" value="mRNA"/>
</dbReference>
<dbReference type="RefSeq" id="NP_200684.2">
    <property type="nucleotide sequence ID" value="NM_125263.5"/>
</dbReference>
<dbReference type="SMR" id="Q6NQ88"/>
<dbReference type="BioGRID" id="21234">
    <property type="interactions" value="1"/>
</dbReference>
<dbReference type="FunCoup" id="Q6NQ88">
    <property type="interactions" value="1365"/>
</dbReference>
<dbReference type="IntAct" id="Q6NQ88">
    <property type="interactions" value="2"/>
</dbReference>
<dbReference type="MINT" id="Q6NQ88"/>
<dbReference type="STRING" id="3702.Q6NQ88"/>
<dbReference type="iPTMnet" id="Q6NQ88"/>
<dbReference type="PaxDb" id="3702-AT5G58760.1"/>
<dbReference type="ProteomicsDB" id="224587"/>
<dbReference type="EnsemblPlants" id="AT5G58760.1">
    <property type="protein sequence ID" value="AT5G58760.1"/>
    <property type="gene ID" value="AT5G58760"/>
</dbReference>
<dbReference type="GeneID" id="835990"/>
<dbReference type="Gramene" id="AT5G58760.1">
    <property type="protein sequence ID" value="AT5G58760.1"/>
    <property type="gene ID" value="AT5G58760"/>
</dbReference>
<dbReference type="KEGG" id="ath:AT5G58760"/>
<dbReference type="Araport" id="AT5G58760"/>
<dbReference type="TAIR" id="AT5G58760">
    <property type="gene designation" value="DDB2"/>
</dbReference>
<dbReference type="eggNOG" id="KOG4328">
    <property type="taxonomic scope" value="Eukaryota"/>
</dbReference>
<dbReference type="HOGENOM" id="CLU_025710_0_0_1"/>
<dbReference type="InParanoid" id="Q6NQ88"/>
<dbReference type="OrthoDB" id="9890280at2759"/>
<dbReference type="PhylomeDB" id="Q6NQ88"/>
<dbReference type="UniPathway" id="UPA00143"/>
<dbReference type="PRO" id="PR:Q6NQ88"/>
<dbReference type="Proteomes" id="UP000006548">
    <property type="component" value="Chromosome 5"/>
</dbReference>
<dbReference type="ExpressionAtlas" id="Q6NQ88">
    <property type="expression patterns" value="baseline and differential"/>
</dbReference>
<dbReference type="GO" id="GO:0080008">
    <property type="term" value="C:Cul4-RING E3 ubiquitin ligase complex"/>
    <property type="evidence" value="ECO:0000250"/>
    <property type="project" value="TAIR"/>
</dbReference>
<dbReference type="GO" id="GO:0005634">
    <property type="term" value="C:nucleus"/>
    <property type="evidence" value="ECO:0000314"/>
    <property type="project" value="TAIR"/>
</dbReference>
<dbReference type="GO" id="GO:0003684">
    <property type="term" value="F:damaged DNA binding"/>
    <property type="evidence" value="ECO:0007669"/>
    <property type="project" value="InterPro"/>
</dbReference>
<dbReference type="GO" id="GO:0008270">
    <property type="term" value="F:zinc ion binding"/>
    <property type="evidence" value="ECO:0007669"/>
    <property type="project" value="UniProtKB-KW"/>
</dbReference>
<dbReference type="GO" id="GO:0006281">
    <property type="term" value="P:DNA repair"/>
    <property type="evidence" value="ECO:0000315"/>
    <property type="project" value="TAIR"/>
</dbReference>
<dbReference type="GO" id="GO:0016567">
    <property type="term" value="P:protein ubiquitination"/>
    <property type="evidence" value="ECO:0007669"/>
    <property type="project" value="UniProtKB-UniPathway"/>
</dbReference>
<dbReference type="GO" id="GO:0010224">
    <property type="term" value="P:response to UV-B"/>
    <property type="evidence" value="ECO:0000315"/>
    <property type="project" value="TAIR"/>
</dbReference>
<dbReference type="FunFam" id="2.130.10.10:FF:000408">
    <property type="entry name" value="protein DAMAGED DNA-BINDING 2"/>
    <property type="match status" value="1"/>
</dbReference>
<dbReference type="Gene3D" id="2.130.10.10">
    <property type="entry name" value="YVTN repeat-like/Quinoprotein amine dehydrogenase"/>
    <property type="match status" value="1"/>
</dbReference>
<dbReference type="Gene3D" id="4.10.60.10">
    <property type="entry name" value="Zinc finger, CCHC-type"/>
    <property type="match status" value="1"/>
</dbReference>
<dbReference type="InterPro" id="IPR033312">
    <property type="entry name" value="DDB2"/>
</dbReference>
<dbReference type="InterPro" id="IPR015943">
    <property type="entry name" value="WD40/YVTN_repeat-like_dom_sf"/>
</dbReference>
<dbReference type="InterPro" id="IPR036322">
    <property type="entry name" value="WD40_repeat_dom_sf"/>
</dbReference>
<dbReference type="InterPro" id="IPR001680">
    <property type="entry name" value="WD40_rpt"/>
</dbReference>
<dbReference type="PANTHER" id="PTHR15169">
    <property type="entry name" value="DAMAGE-SPECIFIC DNA BINDING PROTEIN 2"/>
    <property type="match status" value="1"/>
</dbReference>
<dbReference type="PANTHER" id="PTHR15169:SF0">
    <property type="entry name" value="DNA DAMAGE-BINDING PROTEIN 2"/>
    <property type="match status" value="1"/>
</dbReference>
<dbReference type="Pfam" id="PF00400">
    <property type="entry name" value="WD40"/>
    <property type="match status" value="3"/>
</dbReference>
<dbReference type="SMART" id="SM00320">
    <property type="entry name" value="WD40"/>
    <property type="match status" value="5"/>
</dbReference>
<dbReference type="SUPFAM" id="SSF50978">
    <property type="entry name" value="WD40 repeat-like"/>
    <property type="match status" value="1"/>
</dbReference>
<dbReference type="PROSITE" id="PS00678">
    <property type="entry name" value="WD_REPEATS_1"/>
    <property type="match status" value="2"/>
</dbReference>
<dbReference type="PROSITE" id="PS50082">
    <property type="entry name" value="WD_REPEATS_2"/>
    <property type="match status" value="2"/>
</dbReference>
<dbReference type="PROSITE" id="PS50294">
    <property type="entry name" value="WD_REPEATS_REGION"/>
    <property type="match status" value="1"/>
</dbReference>
<feature type="chain" id="PRO_0000318605" description="Protein DAMAGED DNA-BINDING 2">
    <location>
        <begin position="1"/>
        <end position="557"/>
    </location>
</feature>
<feature type="repeat" description="WD 1" evidence="2">
    <location>
        <begin position="169"/>
        <end position="209"/>
    </location>
</feature>
<feature type="repeat" description="WD 2" evidence="2">
    <location>
        <begin position="213"/>
        <end position="255"/>
    </location>
</feature>
<feature type="repeat" description="WD 3" evidence="2">
    <location>
        <begin position="265"/>
        <end position="304"/>
    </location>
</feature>
<feature type="repeat" description="WD 4" evidence="2">
    <location>
        <begin position="310"/>
        <end position="350"/>
    </location>
</feature>
<feature type="repeat" description="WD 5" evidence="2">
    <location>
        <begin position="355"/>
        <end position="395"/>
    </location>
</feature>
<feature type="repeat" description="WD 6" evidence="2">
    <location>
        <begin position="415"/>
        <end position="458"/>
    </location>
</feature>
<feature type="repeat" description="WD 7" evidence="2">
    <location>
        <begin position="461"/>
        <end position="500"/>
    </location>
</feature>
<feature type="zinc finger region" description="CCHC-type" evidence="2">
    <location>
        <begin position="100"/>
        <end position="117"/>
    </location>
</feature>
<feature type="region of interest" description="Disordered" evidence="3">
    <location>
        <begin position="1"/>
        <end position="55"/>
    </location>
</feature>
<feature type="region of interest" description="Disordered" evidence="3">
    <location>
        <begin position="515"/>
        <end position="538"/>
    </location>
</feature>
<feature type="short sequence motif" description="DWD box" evidence="8">
    <location>
        <begin position="328"/>
        <end position="343"/>
    </location>
</feature>
<feature type="compositionally biased region" description="Basic and acidic residues" evidence="3">
    <location>
        <begin position="10"/>
        <end position="21"/>
    </location>
</feature>
<feature type="compositionally biased region" description="Acidic residues" evidence="3">
    <location>
        <begin position="26"/>
        <end position="47"/>
    </location>
</feature>
<feature type="mutagenesis site" description="Does not impair interaction with DDB1A." evidence="5">
    <original>R</original>
    <variation>H</variation>
    <location>
        <position position="343"/>
    </location>
</feature>
<organism>
    <name type="scientific">Arabidopsis thaliana</name>
    <name type="common">Mouse-ear cress</name>
    <dbReference type="NCBI Taxonomy" id="3702"/>
    <lineage>
        <taxon>Eukaryota</taxon>
        <taxon>Viridiplantae</taxon>
        <taxon>Streptophyta</taxon>
        <taxon>Embryophyta</taxon>
        <taxon>Tracheophyta</taxon>
        <taxon>Spermatophyta</taxon>
        <taxon>Magnoliopsida</taxon>
        <taxon>eudicotyledons</taxon>
        <taxon>Gunneridae</taxon>
        <taxon>Pentapetalae</taxon>
        <taxon>rosids</taxon>
        <taxon>malvids</taxon>
        <taxon>Brassicales</taxon>
        <taxon>Brassicaceae</taxon>
        <taxon>Camelineae</taxon>
        <taxon>Arabidopsis</taxon>
    </lineage>
</organism>
<keyword id="KW-0227">DNA damage</keyword>
<keyword id="KW-0234">DNA repair</keyword>
<keyword id="KW-0238">DNA-binding</keyword>
<keyword id="KW-0479">Metal-binding</keyword>
<keyword id="KW-0539">Nucleus</keyword>
<keyword id="KW-1185">Reference proteome</keyword>
<keyword id="KW-0677">Repeat</keyword>
<keyword id="KW-0833">Ubl conjugation pathway</keyword>
<keyword id="KW-0853">WD repeat</keyword>
<keyword id="KW-0862">Zinc</keyword>
<keyword id="KW-0863">Zinc-finger</keyword>
<sequence length="557" mass="62829">MSSTRSRRKRDPEIVIARDTDSELSSSEEEEEEEDNYPFSESEEEDEAVKNGGKIELEKNKAKGKAPITVKLIKKVCKVCKQPGHEAGFKGATYIDCPMKPCFLCKMPGHTTMSCPHRVVTDHGILPTSHRNTKNPIDFVFKRQLQPRIPPIKPKYVIPDQVHCAVIRYHSRRVTCLEFHPTKNNILLSGDKKGQIGVWDFGKVYEKNVYGNIHSVQVNNMRFSPTNDDMVYSASSDGTIGYTDLETGTSSTLLNLNPDGWQGANSWKMLYGMDINSEKGVVLAADNFGFLHMIDHRTNNSTGEPILIHKQGSKVCGLDCNPVQPELLLSCGNDHFARIWDMRKLQPKASLHDLAHKRVVNSAYFSPSSGTKILTTCQDNRIRIWDSIFGNLDLPSREIVHSNDFNRHLTPFKAEWDPKDTSESLIVIGRYISENYNGTALHPIDFIDASNGQLVAEVMDPNITTITPVNKLHPRDDVLASGSSRSLFIWRPQDNTEMVEEKKDKKIIICYGDSKKKGKKQKRGSDDEDDEDDIFSSKGKNIKVNKYQAKTTKKTKT</sequence>
<evidence type="ECO:0000250" key="1"/>
<evidence type="ECO:0000255" key="2"/>
<evidence type="ECO:0000256" key="3">
    <source>
        <dbReference type="SAM" id="MobiDB-lite"/>
    </source>
</evidence>
<evidence type="ECO:0000269" key="4">
    <source>
    </source>
</evidence>
<evidence type="ECO:0000269" key="5">
    <source>
    </source>
</evidence>
<evidence type="ECO:0000269" key="6">
    <source>
    </source>
</evidence>
<evidence type="ECO:0000305" key="7"/>
<evidence type="ECO:0000305" key="8">
    <source>
    </source>
</evidence>
<proteinExistence type="evidence at protein level"/>
<gene>
    <name type="primary">DDB2</name>
    <name type="ordered locus">At5g58760</name>
    <name type="ORF">MZN1.20</name>
</gene>